<feature type="chain" id="PRO_0000232920" description="ADP-ribosylation factor-like protein 8B">
    <location>
        <begin position="1"/>
        <end position="186"/>
    </location>
</feature>
<feature type="intramembrane region" description="Note=Mediates targeting to membranes" evidence="3">
    <location>
        <begin position="1"/>
        <end position="19"/>
    </location>
</feature>
<feature type="binding site" evidence="3">
    <location>
        <begin position="29"/>
        <end position="35"/>
    </location>
    <ligand>
        <name>GTP</name>
        <dbReference type="ChEBI" id="CHEBI:37565"/>
    </ligand>
</feature>
<feature type="binding site" evidence="1">
    <location>
        <begin position="71"/>
        <end position="75"/>
    </location>
    <ligand>
        <name>GTP</name>
        <dbReference type="ChEBI" id="CHEBI:37565"/>
    </ligand>
</feature>
<feature type="binding site" evidence="3">
    <location>
        <begin position="130"/>
        <end position="133"/>
    </location>
    <ligand>
        <name>GTP</name>
        <dbReference type="ChEBI" id="CHEBI:37565"/>
    </ligand>
</feature>
<feature type="cross-link" description="Glycyl lysine isopeptide (Lys-Gly) (interchain with G-Cter in ubiquitin)" evidence="3">
    <location>
        <position position="141"/>
    </location>
</feature>
<proteinExistence type="evidence at transcript level"/>
<gene>
    <name type="primary">ARL8B</name>
</gene>
<sequence>MLALISRLLDWFRSLFWKEEMELTLVGLQYSGKTTFVNVIASGQFSEDMIPTVGFNMRKVTKGNVTIKIWDIGGQPRFQSMWERYCRGVNAIVYMIDAADREKIEASRNELHNLLDKPQLQGIPVLVLGNKRDLPNALDEKQLIEKMNLSAIQDREICCYSISCKEKDNIDITLQWLIQHSKSRRS</sequence>
<reference key="1">
    <citation type="submission" date="2006-01" db="EMBL/GenBank/DDBJ databases">
        <authorList>
            <consortium name="NIH - Mammalian Gene Collection (MGC) project"/>
        </authorList>
    </citation>
    <scope>NUCLEOTIDE SEQUENCE [LARGE SCALE MRNA]</scope>
    <source>
        <strain>Hereford</strain>
        <tissue>Rumen</tissue>
    </source>
</reference>
<comment type="function">
    <text evidence="2 3">Small GTPase which cycles between active GTP-bound and inactive GDP-bound states. In its active state, binds to a variety of effector proteins playing a key role in the regulation of lysosomal positioning which is important for nutrient sensing, natural killer cell-mediated cytotoxicity and antigen presentation. Along with its effectors, orchestrates lysosomal transport and fusion. Localizes specifically to lysosomal membranes and mediates anterograde lysosomal motility by recruiting PLEKHM2, which in turn recruits the motor protein kinesin-1 on lysosomes. Required for lysosomal and cytolytic granule exocytosis. Critical factor involved in NK cell-mediated cytotoxicity. Drives the polarization of cytolytic granules and microtubule-organizing centers (MTOCs) toward the immune synapse between effector NK lymphocytes and target cells (By similarity). In neurons, mediates the anterograde axonal long-range transport of presynaptic lysosome-related vesicles required for presynaptic biogenesis and synaptic function (By similarity). Also acts as a regulator of endosome to lysosome trafficking pathways of special significance for host defense (By similarity). Recruits RUFY1 onto early endosomes regulating endosomes to trans-Golgi network proteins retrieval (By similarity). Regulates cargo trafficking to lysosomes by binding to PLEKHM1 and recruiting the HOPS subunit VPS41, resulting in functional assembly of the HOPS complex on lysosomal membranes. Plays an important role in cargo delivery to lysosomes for antigen presentation and microbial killing. Directs the intersection of CD1d with lipid antigens in lysosomes, and plays a role in intersecting phagosomes with lysosomes to generate phagolysosomes that kill microbes (By similarity). Involved in the process of MHC II presentation. Regulates the delivery of antigens to lysosomes and the formation of MHC II-peptide complexes through the recruitment of the HOPS complex to lysosomes allowing the fusion of late endosomes to lysosomes (By similarity). May play a role in chromosome segregation (By similarity).</text>
</comment>
<comment type="catalytic activity">
    <reaction evidence="3">
        <text>GTP + H2O = GDP + phosphate + H(+)</text>
        <dbReference type="Rhea" id="RHEA:19669"/>
        <dbReference type="ChEBI" id="CHEBI:15377"/>
        <dbReference type="ChEBI" id="CHEBI:15378"/>
        <dbReference type="ChEBI" id="CHEBI:37565"/>
        <dbReference type="ChEBI" id="CHEBI:43474"/>
        <dbReference type="ChEBI" id="CHEBI:58189"/>
        <dbReference type="EC" id="3.6.5.2"/>
    </reaction>
    <physiologicalReaction direction="left-to-right" evidence="3">
        <dbReference type="Rhea" id="RHEA:19670"/>
    </physiologicalReaction>
</comment>
<comment type="subunit">
    <text evidence="3">Interacts with tubulin. Interacts with BORCS5; recruits ARL8B to lysosomes. Interacts with VPS41; the interaction mediates the recruitment of the HOPS complex to lysosomes. Interacts (GTP-bound form) with PLEKHM2 (via RUN domain); the interaction is required to recruit the motor protein kinesin-1 on lysosomes. Interacts (GTP-bound form) with PLEKHM1 (via RUN domain); the interaction is required for PLEKHM1 localization to lysosomes and for ARL8B function in delivery and degradation of endocytic and autophagic cargo in lysosomes. PLEKHM1 and PLEKHM2 compete for interaction with ARL8B. Interacts (GTP-bound form) with RUFY1; the interaction is required for RUFY1 endosomal location. When GTP-bound, interacts with RUFY3 and RUFY4, but not with RUFY1, nor RUFY2 (By similarity).</text>
</comment>
<comment type="subcellular location">
    <subcellularLocation>
        <location evidence="3">Late endosome membrane</location>
    </subcellularLocation>
    <subcellularLocation>
        <location evidence="3">Lysosome membrane</location>
    </subcellularLocation>
    <subcellularLocation>
        <location evidence="3">Cytoplasm</location>
        <location evidence="3">Cytoskeleton</location>
        <location evidence="3">Spindle</location>
    </subcellularLocation>
    <subcellularLocation>
        <location evidence="2">Cell projection</location>
        <location evidence="2">Axon</location>
    </subcellularLocation>
    <subcellularLocation>
        <location evidence="2">Synapse</location>
    </subcellularLocation>
    <subcellularLocation>
        <location evidence="3">Cytolytic granule membrane</location>
    </subcellularLocation>
    <subcellularLocation>
        <location evidence="3">Early endosome membrane</location>
    </subcellularLocation>
    <text evidence="2 3">GTP-bound form resides on lysosomal membranes, whereas GDP-bound form is likely associated with microtubular structures. Localizes with microtubules at the spindle mid-zone during mitosis (By similarity). In dendritic cells, localizes to MHC II+ compartments (By similarity).</text>
</comment>
<comment type="PTM">
    <text evidence="3">Ubiquitinated at Lys-141 by RNF167, leading to its degradation.</text>
</comment>
<comment type="similarity">
    <text evidence="4">Belongs to the small GTPase superfamily. Arf family.</text>
</comment>
<name>ARL8B_BOVIN</name>
<keyword id="KW-0131">Cell cycle</keyword>
<keyword id="KW-0132">Cell division</keyword>
<keyword id="KW-0966">Cell projection</keyword>
<keyword id="KW-0159">Chromosome partition</keyword>
<keyword id="KW-0963">Cytoplasm</keyword>
<keyword id="KW-0206">Cytoskeleton</keyword>
<keyword id="KW-0967">Endosome</keyword>
<keyword id="KW-0342">GTP-binding</keyword>
<keyword id="KW-0378">Hydrolase</keyword>
<keyword id="KW-1017">Isopeptide bond</keyword>
<keyword id="KW-0458">Lysosome</keyword>
<keyword id="KW-0472">Membrane</keyword>
<keyword id="KW-0498">Mitosis</keyword>
<keyword id="KW-0547">Nucleotide-binding</keyword>
<keyword id="KW-0653">Protein transport</keyword>
<keyword id="KW-1185">Reference proteome</keyword>
<keyword id="KW-0770">Synapse</keyword>
<keyword id="KW-0813">Transport</keyword>
<keyword id="KW-0832">Ubl conjugation</keyword>
<dbReference type="EC" id="3.6.5.2" evidence="3"/>
<dbReference type="EMBL" id="BC112814">
    <property type="protein sequence ID" value="AAI12815.1"/>
    <property type="molecule type" value="mRNA"/>
</dbReference>
<dbReference type="RefSeq" id="NP_001039536.1">
    <property type="nucleotide sequence ID" value="NM_001046071.2"/>
</dbReference>
<dbReference type="SMR" id="Q2KI07"/>
<dbReference type="FunCoup" id="Q2KI07">
    <property type="interactions" value="3682"/>
</dbReference>
<dbReference type="STRING" id="9913.ENSBTAP00000073537"/>
<dbReference type="PaxDb" id="9913-ENSBTAP00000017150"/>
<dbReference type="GeneID" id="511009"/>
<dbReference type="KEGG" id="bta:511009"/>
<dbReference type="CTD" id="55207"/>
<dbReference type="eggNOG" id="KOG0075">
    <property type="taxonomic scope" value="Eukaryota"/>
</dbReference>
<dbReference type="InParanoid" id="Q2KI07"/>
<dbReference type="OrthoDB" id="2011769at2759"/>
<dbReference type="Proteomes" id="UP000009136">
    <property type="component" value="Unplaced"/>
</dbReference>
<dbReference type="GO" id="GO:1904115">
    <property type="term" value="C:axon cytoplasm"/>
    <property type="evidence" value="ECO:0007669"/>
    <property type="project" value="GOC"/>
</dbReference>
<dbReference type="GO" id="GO:0101004">
    <property type="term" value="C:cytolytic granule membrane"/>
    <property type="evidence" value="ECO:0007669"/>
    <property type="project" value="UniProtKB-SubCell"/>
</dbReference>
<dbReference type="GO" id="GO:0005829">
    <property type="term" value="C:cytosol"/>
    <property type="evidence" value="ECO:0007669"/>
    <property type="project" value="GOC"/>
</dbReference>
<dbReference type="GO" id="GO:0031901">
    <property type="term" value="C:early endosome membrane"/>
    <property type="evidence" value="ECO:0007669"/>
    <property type="project" value="UniProtKB-SubCell"/>
</dbReference>
<dbReference type="GO" id="GO:0031902">
    <property type="term" value="C:late endosome membrane"/>
    <property type="evidence" value="ECO:0007669"/>
    <property type="project" value="UniProtKB-SubCell"/>
</dbReference>
<dbReference type="GO" id="GO:0005765">
    <property type="term" value="C:lysosomal membrane"/>
    <property type="evidence" value="ECO:0000318"/>
    <property type="project" value="GO_Central"/>
</dbReference>
<dbReference type="GO" id="GO:0005764">
    <property type="term" value="C:lysosome"/>
    <property type="evidence" value="ECO:0000250"/>
    <property type="project" value="UniProtKB"/>
</dbReference>
<dbReference type="GO" id="GO:0005819">
    <property type="term" value="C:spindle"/>
    <property type="evidence" value="ECO:0007669"/>
    <property type="project" value="UniProtKB-SubCell"/>
</dbReference>
<dbReference type="GO" id="GO:0045202">
    <property type="term" value="C:synapse"/>
    <property type="evidence" value="ECO:0007669"/>
    <property type="project" value="UniProtKB-SubCell"/>
</dbReference>
<dbReference type="GO" id="GO:0003925">
    <property type="term" value="F:G protein activity"/>
    <property type="evidence" value="ECO:0007669"/>
    <property type="project" value="UniProtKB-EC"/>
</dbReference>
<dbReference type="GO" id="GO:0005525">
    <property type="term" value="F:GTP binding"/>
    <property type="evidence" value="ECO:0007669"/>
    <property type="project" value="UniProtKB-KW"/>
</dbReference>
<dbReference type="GO" id="GO:0008089">
    <property type="term" value="P:anterograde axonal transport"/>
    <property type="evidence" value="ECO:0000318"/>
    <property type="project" value="GO_Central"/>
</dbReference>
<dbReference type="GO" id="GO:0002747">
    <property type="term" value="P:antigen processing and presentation following phagocytosis"/>
    <property type="evidence" value="ECO:0000250"/>
    <property type="project" value="UniProtKB"/>
</dbReference>
<dbReference type="GO" id="GO:0002505">
    <property type="term" value="P:antigen processing and presentation of polysaccharide antigen via MHC class II"/>
    <property type="evidence" value="ECO:0000250"/>
    <property type="project" value="UniProtKB"/>
</dbReference>
<dbReference type="GO" id="GO:0061909">
    <property type="term" value="P:autophagosome-lysosome fusion"/>
    <property type="evidence" value="ECO:0000250"/>
    <property type="project" value="UniProtKB"/>
</dbReference>
<dbReference type="GO" id="GO:1990927">
    <property type="term" value="P:calcium ion regulated lysosome exocytosis"/>
    <property type="evidence" value="ECO:0000250"/>
    <property type="project" value="UniProtKB"/>
</dbReference>
<dbReference type="GO" id="GO:0051301">
    <property type="term" value="P:cell division"/>
    <property type="evidence" value="ECO:0007669"/>
    <property type="project" value="UniProtKB-KW"/>
</dbReference>
<dbReference type="GO" id="GO:0007059">
    <property type="term" value="P:chromosome segregation"/>
    <property type="evidence" value="ECO:0007669"/>
    <property type="project" value="UniProtKB-KW"/>
</dbReference>
<dbReference type="GO" id="GO:0090117">
    <property type="term" value="P:endosome to lysosome transport of low-density lipoprotein particle"/>
    <property type="evidence" value="ECO:0000250"/>
    <property type="project" value="UniProtKB"/>
</dbReference>
<dbReference type="GO" id="GO:1902774">
    <property type="term" value="P:late endosome to lysosome transport"/>
    <property type="evidence" value="ECO:0000250"/>
    <property type="project" value="UniProtKB"/>
</dbReference>
<dbReference type="GO" id="GO:0032418">
    <property type="term" value="P:lysosome localization"/>
    <property type="evidence" value="ECO:0000250"/>
    <property type="project" value="UniProtKB"/>
</dbReference>
<dbReference type="GO" id="GO:0042267">
    <property type="term" value="P:natural killer cell mediated cytotoxicity"/>
    <property type="evidence" value="ECO:0000250"/>
    <property type="project" value="UniProtKB"/>
</dbReference>
<dbReference type="GO" id="GO:0090385">
    <property type="term" value="P:phagosome-lysosome fusion"/>
    <property type="evidence" value="ECO:0000250"/>
    <property type="project" value="UniProtKB"/>
</dbReference>
<dbReference type="GO" id="GO:0001778">
    <property type="term" value="P:plasma membrane repair"/>
    <property type="evidence" value="ECO:0000250"/>
    <property type="project" value="UniProtKB"/>
</dbReference>
<dbReference type="GO" id="GO:0015031">
    <property type="term" value="P:protein transport"/>
    <property type="evidence" value="ECO:0007669"/>
    <property type="project" value="UniProtKB-KW"/>
</dbReference>
<dbReference type="CDD" id="cd04159">
    <property type="entry name" value="Arl10_like"/>
    <property type="match status" value="1"/>
</dbReference>
<dbReference type="FunFam" id="3.40.50.300:FF:000247">
    <property type="entry name" value="ADP-ribosylation factor-like GTPase 8A"/>
    <property type="match status" value="1"/>
</dbReference>
<dbReference type="Gene3D" id="3.40.50.300">
    <property type="entry name" value="P-loop containing nucleotide triphosphate hydrolases"/>
    <property type="match status" value="1"/>
</dbReference>
<dbReference type="InterPro" id="IPR044154">
    <property type="entry name" value="Arl8a/8b"/>
</dbReference>
<dbReference type="InterPro" id="IPR027417">
    <property type="entry name" value="P-loop_NTPase"/>
</dbReference>
<dbReference type="InterPro" id="IPR005225">
    <property type="entry name" value="Small_GTP-bd"/>
</dbReference>
<dbReference type="InterPro" id="IPR006689">
    <property type="entry name" value="Small_GTPase_ARF/SAR"/>
</dbReference>
<dbReference type="NCBIfam" id="TIGR00231">
    <property type="entry name" value="small_GTP"/>
    <property type="match status" value="1"/>
</dbReference>
<dbReference type="PANTHER" id="PTHR45732">
    <property type="entry name" value="ADP-RIBOSYLATION FACTOR-LIKE PROTEIN 8"/>
    <property type="match status" value="1"/>
</dbReference>
<dbReference type="PANTHER" id="PTHR45732:SF13">
    <property type="entry name" value="ADP-RIBOSYLATION FACTOR-LIKE PROTEIN 8B"/>
    <property type="match status" value="1"/>
</dbReference>
<dbReference type="Pfam" id="PF00025">
    <property type="entry name" value="Arf"/>
    <property type="match status" value="1"/>
</dbReference>
<dbReference type="PRINTS" id="PR00328">
    <property type="entry name" value="SAR1GTPBP"/>
</dbReference>
<dbReference type="SMART" id="SM00177">
    <property type="entry name" value="ARF"/>
    <property type="match status" value="1"/>
</dbReference>
<dbReference type="SMART" id="SM00175">
    <property type="entry name" value="RAB"/>
    <property type="match status" value="1"/>
</dbReference>
<dbReference type="SMART" id="SM00173">
    <property type="entry name" value="RAS"/>
    <property type="match status" value="1"/>
</dbReference>
<dbReference type="SMART" id="SM00178">
    <property type="entry name" value="SAR"/>
    <property type="match status" value="1"/>
</dbReference>
<dbReference type="SUPFAM" id="SSF52540">
    <property type="entry name" value="P-loop containing nucleoside triphosphate hydrolases"/>
    <property type="match status" value="1"/>
</dbReference>
<dbReference type="PROSITE" id="PS51417">
    <property type="entry name" value="ARF"/>
    <property type="match status" value="1"/>
</dbReference>
<protein>
    <recommendedName>
        <fullName evidence="4">ADP-ribosylation factor-like protein 8B</fullName>
        <ecNumber evidence="3">3.6.5.2</ecNumber>
    </recommendedName>
</protein>
<accession>Q2KI07</accession>
<organism>
    <name type="scientific">Bos taurus</name>
    <name type="common">Bovine</name>
    <dbReference type="NCBI Taxonomy" id="9913"/>
    <lineage>
        <taxon>Eukaryota</taxon>
        <taxon>Metazoa</taxon>
        <taxon>Chordata</taxon>
        <taxon>Craniata</taxon>
        <taxon>Vertebrata</taxon>
        <taxon>Euteleostomi</taxon>
        <taxon>Mammalia</taxon>
        <taxon>Eutheria</taxon>
        <taxon>Laurasiatheria</taxon>
        <taxon>Artiodactyla</taxon>
        <taxon>Ruminantia</taxon>
        <taxon>Pecora</taxon>
        <taxon>Bovidae</taxon>
        <taxon>Bovinae</taxon>
        <taxon>Bos</taxon>
    </lineage>
</organism>
<evidence type="ECO:0000250" key="1">
    <source>
        <dbReference type="UniProtKB" id="P62330"/>
    </source>
</evidence>
<evidence type="ECO:0000250" key="2">
    <source>
        <dbReference type="UniProtKB" id="Q9CQW2"/>
    </source>
</evidence>
<evidence type="ECO:0000250" key="3">
    <source>
        <dbReference type="UniProtKB" id="Q9NVJ2"/>
    </source>
</evidence>
<evidence type="ECO:0000305" key="4"/>